<comment type="function">
    <text evidence="1">Component of the autophagy machinery that controls the major intracellular degradation process by which cytoplasmic materials are packaged into autophagosomes and delivered to lysosomes for degradation. Binds phosphatidylinositol 3-phosphate (PtdIns3P), and other phosphoinositides including PtdIns(3,5)P2, forming on membranes of the endoplasmic reticulum upon activation of the upstream ULK1 and PI3 kinases and is recruited at phagophore assembly sites where it regulates the elongation of nascent phagophores downstream of WIPI2.</text>
</comment>
<comment type="subcellular location">
    <subcellularLocation>
        <location evidence="1">Preautophagosomal structure</location>
    </subcellularLocation>
    <subcellularLocation>
        <location evidence="1">Lysosome</location>
    </subcellularLocation>
</comment>
<comment type="domain">
    <text evidence="2">The L/FRRG motif is required for recruitment to PtdIns3P.</text>
</comment>
<comment type="similarity">
    <text evidence="3">Belongs to the WD repeat PROPPIN family.</text>
</comment>
<sequence>MNLLPSNPHGNGLLYAGFNQDHGCFACGMENGFRVYNTDPLKEKEKHEFLEGGVGHVEMLFRCNYLALVGGGKKPKYPPNKVMIWDDLKKKTVIEIEFSTEVKAVKLRRDRIVVVLDSMIKVFTFTHNPHQLHVFETCYNPKGLCVLCPNSNNSLLAFPATHSGHVQIVDLANTEKPPVDIPAHEGVLCCITLNLQGTRIATASEKGTLIRIFDTSAGQLIQELRRGSQTANIYCINFNQDASLICVSSDHGTVHIFAAEDPKRNKQSSLASASFLPKYFSSKWSFSKFQVPSGSPCVCAFGTEPNAVIAICADGSYYKFLFNPKGECSRDVYAQFLEMTDEKI</sequence>
<proteinExistence type="evidence at transcript level"/>
<dbReference type="EMBL" id="BC047802">
    <property type="protein sequence ID" value="AAH47802.1"/>
    <property type="molecule type" value="mRNA"/>
</dbReference>
<dbReference type="SMR" id="Q7ZUW6"/>
<dbReference type="FunCoup" id="Q7ZUW6">
    <property type="interactions" value="2642"/>
</dbReference>
<dbReference type="STRING" id="7955.ENSDARP00000126974"/>
<dbReference type="PaxDb" id="7955-ENSDARP00000126974"/>
<dbReference type="AGR" id="ZFIN:ZDB-GENE-040426-863"/>
<dbReference type="ZFIN" id="ZDB-GENE-040426-863">
    <property type="gene designation" value="wdr45b"/>
</dbReference>
<dbReference type="eggNOG" id="KOG2111">
    <property type="taxonomic scope" value="Eukaryota"/>
</dbReference>
<dbReference type="InParanoid" id="Q7ZUW6"/>
<dbReference type="PhylomeDB" id="Q7ZUW6"/>
<dbReference type="Reactome" id="R-DRE-1632852">
    <property type="pathway name" value="Macroautophagy"/>
</dbReference>
<dbReference type="PRO" id="PR:Q7ZUW6"/>
<dbReference type="Proteomes" id="UP000000437">
    <property type="component" value="Unplaced"/>
</dbReference>
<dbReference type="GO" id="GO:0005829">
    <property type="term" value="C:cytosol"/>
    <property type="evidence" value="ECO:0000318"/>
    <property type="project" value="GO_Central"/>
</dbReference>
<dbReference type="GO" id="GO:0005764">
    <property type="term" value="C:lysosome"/>
    <property type="evidence" value="ECO:0000250"/>
    <property type="project" value="UniProtKB"/>
</dbReference>
<dbReference type="GO" id="GO:0000407">
    <property type="term" value="C:phagophore assembly site"/>
    <property type="evidence" value="ECO:0000250"/>
    <property type="project" value="UniProtKB"/>
</dbReference>
<dbReference type="GO" id="GO:0034045">
    <property type="term" value="C:phagophore assembly site membrane"/>
    <property type="evidence" value="ECO:0000318"/>
    <property type="project" value="GO_Central"/>
</dbReference>
<dbReference type="GO" id="GO:0080025">
    <property type="term" value="F:phosphatidylinositol-3,5-bisphosphate binding"/>
    <property type="evidence" value="ECO:0000250"/>
    <property type="project" value="UniProtKB"/>
</dbReference>
<dbReference type="GO" id="GO:0032266">
    <property type="term" value="F:phosphatidylinositol-3-phosphate binding"/>
    <property type="evidence" value="ECO:0000250"/>
    <property type="project" value="UniProtKB"/>
</dbReference>
<dbReference type="GO" id="GO:0030674">
    <property type="term" value="F:protein-macromolecule adaptor activity"/>
    <property type="evidence" value="ECO:0000318"/>
    <property type="project" value="GO_Central"/>
</dbReference>
<dbReference type="GO" id="GO:0000045">
    <property type="term" value="P:autophagosome assembly"/>
    <property type="evidence" value="ECO:0000250"/>
    <property type="project" value="UniProtKB"/>
</dbReference>
<dbReference type="GO" id="GO:0000422">
    <property type="term" value="P:autophagy of mitochondrion"/>
    <property type="evidence" value="ECO:0000318"/>
    <property type="project" value="GO_Central"/>
</dbReference>
<dbReference type="GO" id="GO:0009267">
    <property type="term" value="P:cellular response to starvation"/>
    <property type="evidence" value="ECO:0000250"/>
    <property type="project" value="UniProtKB"/>
</dbReference>
<dbReference type="GO" id="GO:0061723">
    <property type="term" value="P:glycophagy"/>
    <property type="evidence" value="ECO:0000318"/>
    <property type="project" value="GO_Central"/>
</dbReference>
<dbReference type="GO" id="GO:0044804">
    <property type="term" value="P:nucleophagy"/>
    <property type="evidence" value="ECO:0000318"/>
    <property type="project" value="GO_Central"/>
</dbReference>
<dbReference type="GO" id="GO:0000425">
    <property type="term" value="P:pexophagy"/>
    <property type="evidence" value="ECO:0000318"/>
    <property type="project" value="GO_Central"/>
</dbReference>
<dbReference type="GO" id="GO:0034497">
    <property type="term" value="P:protein localization to phagophore assembly site"/>
    <property type="evidence" value="ECO:0000318"/>
    <property type="project" value="GO_Central"/>
</dbReference>
<dbReference type="FunFam" id="2.130.10.10:FF:000083">
    <property type="entry name" value="WD repeat domain phosphoinositide-interacting protein 3"/>
    <property type="match status" value="1"/>
</dbReference>
<dbReference type="Gene3D" id="2.130.10.10">
    <property type="entry name" value="YVTN repeat-like/Quinoprotein amine dehydrogenase"/>
    <property type="match status" value="1"/>
</dbReference>
<dbReference type="InterPro" id="IPR048720">
    <property type="entry name" value="PROPPIN"/>
</dbReference>
<dbReference type="InterPro" id="IPR015943">
    <property type="entry name" value="WD40/YVTN_repeat-like_dom_sf"/>
</dbReference>
<dbReference type="InterPro" id="IPR036322">
    <property type="entry name" value="WD40_repeat_dom_sf"/>
</dbReference>
<dbReference type="InterPro" id="IPR001680">
    <property type="entry name" value="WD40_rpt"/>
</dbReference>
<dbReference type="PANTHER" id="PTHR11227">
    <property type="entry name" value="WD-REPEAT PROTEIN INTERACTING WITH PHOSPHOINOSIDES WIPI -RELATED"/>
    <property type="match status" value="1"/>
</dbReference>
<dbReference type="Pfam" id="PF21032">
    <property type="entry name" value="PROPPIN"/>
    <property type="match status" value="1"/>
</dbReference>
<dbReference type="SMART" id="SM00320">
    <property type="entry name" value="WD40"/>
    <property type="match status" value="2"/>
</dbReference>
<dbReference type="SUPFAM" id="SSF50978">
    <property type="entry name" value="WD40 repeat-like"/>
    <property type="match status" value="1"/>
</dbReference>
<feature type="chain" id="PRO_0000051449" description="WD repeat domain phosphoinositide-interacting protein 3">
    <location>
        <begin position="1"/>
        <end position="344"/>
    </location>
</feature>
<feature type="repeat" description="WD 1">
    <location>
        <begin position="183"/>
        <end position="223"/>
    </location>
</feature>
<feature type="repeat" description="WD 2">
    <location>
        <begin position="228"/>
        <end position="267"/>
    </location>
</feature>
<feature type="short sequence motif" description="L/FRRG motif" evidence="2">
    <location>
        <begin position="224"/>
        <end position="227"/>
    </location>
</feature>
<protein>
    <recommendedName>
        <fullName>WD repeat domain phosphoinositide-interacting protein 3</fullName>
        <shortName>WIPI-3</shortName>
    </recommendedName>
    <alternativeName>
        <fullName>WD repeat-containing protein 45-like</fullName>
        <shortName>WDR45-like protein</shortName>
    </alternativeName>
    <alternativeName>
        <fullName>WD repeat-containing protein 45B</fullName>
    </alternativeName>
</protein>
<name>WIPI3_DANRE</name>
<accession>Q7ZUW6</accession>
<evidence type="ECO:0000250" key="1">
    <source>
        <dbReference type="UniProtKB" id="Q5MNZ6"/>
    </source>
</evidence>
<evidence type="ECO:0000250" key="2">
    <source>
        <dbReference type="UniProtKB" id="Q9Y4P8"/>
    </source>
</evidence>
<evidence type="ECO:0000305" key="3"/>
<reference key="1">
    <citation type="submission" date="2003-03" db="EMBL/GenBank/DDBJ databases">
        <authorList>
            <consortium name="NIH - Zebrafish Gene Collection (ZGC) project"/>
        </authorList>
    </citation>
    <scope>NUCLEOTIDE SEQUENCE [LARGE SCALE MRNA]</scope>
    <source>
        <strain>AB</strain>
        <tissue>Embryo</tissue>
    </source>
</reference>
<organism>
    <name type="scientific">Danio rerio</name>
    <name type="common">Zebrafish</name>
    <name type="synonym">Brachydanio rerio</name>
    <dbReference type="NCBI Taxonomy" id="7955"/>
    <lineage>
        <taxon>Eukaryota</taxon>
        <taxon>Metazoa</taxon>
        <taxon>Chordata</taxon>
        <taxon>Craniata</taxon>
        <taxon>Vertebrata</taxon>
        <taxon>Euteleostomi</taxon>
        <taxon>Actinopterygii</taxon>
        <taxon>Neopterygii</taxon>
        <taxon>Teleostei</taxon>
        <taxon>Ostariophysi</taxon>
        <taxon>Cypriniformes</taxon>
        <taxon>Danionidae</taxon>
        <taxon>Danioninae</taxon>
        <taxon>Danio</taxon>
    </lineage>
</organism>
<gene>
    <name type="primary">wdr45b</name>
    <name type="synonym">wdr45l</name>
    <name type="synonym">wipi3</name>
</gene>
<keyword id="KW-0072">Autophagy</keyword>
<keyword id="KW-0446">Lipid-binding</keyword>
<keyword id="KW-0458">Lysosome</keyword>
<keyword id="KW-1185">Reference proteome</keyword>
<keyword id="KW-0677">Repeat</keyword>
<keyword id="KW-0853">WD repeat</keyword>